<organism>
    <name type="scientific">Cavia porcellus</name>
    <name type="common">Guinea pig</name>
    <dbReference type="NCBI Taxonomy" id="10141"/>
    <lineage>
        <taxon>Eukaryota</taxon>
        <taxon>Metazoa</taxon>
        <taxon>Chordata</taxon>
        <taxon>Craniata</taxon>
        <taxon>Vertebrata</taxon>
        <taxon>Euteleostomi</taxon>
        <taxon>Mammalia</taxon>
        <taxon>Eutheria</taxon>
        <taxon>Euarchontoglires</taxon>
        <taxon>Glires</taxon>
        <taxon>Rodentia</taxon>
        <taxon>Hystricomorpha</taxon>
        <taxon>Caviidae</taxon>
        <taxon>Cavia</taxon>
    </lineage>
</organism>
<sequence>MGLLTGDALFSVAVAVAIFLLLVDLMHRRQRWAARYPPGPVPVPGLGNLLQVDFENMAYSCDKLRHQFGDVFSLQFVWTPVVVVNGLLAVREALVNNSTDTSDRPTLPTNALLGFGPKAQGVIGAYYGPAWREQRRFSVSSLRNFGLGKKSLEQWVTEEAACLCAAFTNHAGQPFCPKALLNKAVCNVISSLIYARRFDYDDPMVLRLLEFLEETLRENSSLKIQVLNSIPLLLRIPCVAAKVLSAQRSFIALNDKLLAEHNTGWAPDQPPRDLTDAFLTEMHKAQGNSESSFNDENLRLLVSDLFGAGMVTTSVTLSWALLLMILHPDVQRHVQEEIDEVIGQVRCPEMADQAHMPFTNAVIHEVQRFADIVPMGVPHMTSRDTEVQGFLIPKGTMLFTNLSSVLKDETVWEKPLHFHPGHFLDAEGRFVKREAFMPFSAGPRICLGEPLARMELFLFFTSLLQRFSFSVPEGQPRPSDRGAPYLVVLPSPYQLCAVLR</sequence>
<feature type="chain" id="PRO_0000051740" description="Cytochrome P450 2D16">
    <location>
        <begin position="1"/>
        <end position="500"/>
    </location>
</feature>
<feature type="binding site" description="axial binding residue" evidence="1">
    <location>
        <position position="446"/>
    </location>
    <ligand>
        <name>heme</name>
        <dbReference type="ChEBI" id="CHEBI:30413"/>
    </ligand>
    <ligandPart>
        <name>Fe</name>
        <dbReference type="ChEBI" id="CHEBI:18248"/>
    </ligandPart>
</feature>
<feature type="modified residue" description="Phosphoserine" evidence="2">
    <location>
        <position position="249"/>
    </location>
</feature>
<feature type="sequence conflict" description="In Ref. 2; AAB94568." evidence="3" ref="2">
    <original>I</original>
    <variation>V</variation>
    <location>
        <position position="123"/>
    </location>
</feature>
<feature type="sequence conflict" description="In Ref. 2; AAB94568." evidence="3" ref="2">
    <original>Y</original>
    <variation>N</variation>
    <location>
        <position position="127"/>
    </location>
</feature>
<feature type="sequence conflict" description="In Ref. 2; AAB94568." evidence="3" ref="2">
    <original>G</original>
    <variation>R</variation>
    <location>
        <position position="148"/>
    </location>
</feature>
<dbReference type="EC" id="1.14.14.1"/>
<dbReference type="EMBL" id="U21486">
    <property type="protein sequence ID" value="AAA68479.1"/>
    <property type="molecule type" value="mRNA"/>
</dbReference>
<dbReference type="EMBL" id="AF020345">
    <property type="protein sequence ID" value="AAB94568.1"/>
    <property type="molecule type" value="Genomic_DNA"/>
</dbReference>
<dbReference type="PIR" id="JC4153">
    <property type="entry name" value="JC4153"/>
</dbReference>
<dbReference type="RefSeq" id="NP_001166507.1">
    <property type="nucleotide sequence ID" value="NM_001173036.1"/>
</dbReference>
<dbReference type="SMR" id="Q64403"/>
<dbReference type="FunCoup" id="Q64403">
    <property type="interactions" value="1368"/>
</dbReference>
<dbReference type="STRING" id="10141.ENSCPOP00000016816"/>
<dbReference type="GeneID" id="100169696"/>
<dbReference type="KEGG" id="cpoc:100169696"/>
<dbReference type="CTD" id="100169696"/>
<dbReference type="eggNOG" id="KOG0156">
    <property type="taxonomic scope" value="Eukaryota"/>
</dbReference>
<dbReference type="InParanoid" id="Q64403"/>
<dbReference type="OrthoDB" id="3934656at2759"/>
<dbReference type="Proteomes" id="UP000005447">
    <property type="component" value="Unassembled WGS sequence"/>
</dbReference>
<dbReference type="GO" id="GO:0005789">
    <property type="term" value="C:endoplasmic reticulum membrane"/>
    <property type="evidence" value="ECO:0007669"/>
    <property type="project" value="UniProtKB-SubCell"/>
</dbReference>
<dbReference type="GO" id="GO:0020037">
    <property type="term" value="F:heme binding"/>
    <property type="evidence" value="ECO:0007669"/>
    <property type="project" value="InterPro"/>
</dbReference>
<dbReference type="GO" id="GO:0005506">
    <property type="term" value="F:iron ion binding"/>
    <property type="evidence" value="ECO:0007669"/>
    <property type="project" value="InterPro"/>
</dbReference>
<dbReference type="GO" id="GO:0016712">
    <property type="term" value="F:oxidoreductase activity, acting on paired donors, with incorporation or reduction of molecular oxygen, reduced flavin or flavoprotein as one donor, and incorporation of one atom of oxygen"/>
    <property type="evidence" value="ECO:0007669"/>
    <property type="project" value="UniProtKB-EC"/>
</dbReference>
<dbReference type="GO" id="GO:0019369">
    <property type="term" value="P:arachidonate metabolic process"/>
    <property type="evidence" value="ECO:0007669"/>
    <property type="project" value="TreeGrafter"/>
</dbReference>
<dbReference type="GO" id="GO:0006805">
    <property type="term" value="P:xenobiotic metabolic process"/>
    <property type="evidence" value="ECO:0007669"/>
    <property type="project" value="TreeGrafter"/>
</dbReference>
<dbReference type="CDD" id="cd20663">
    <property type="entry name" value="CYP2D"/>
    <property type="match status" value="1"/>
</dbReference>
<dbReference type="FunFam" id="1.10.630.10:FF:000004">
    <property type="entry name" value="cytochrome P450 2D15 isoform X1"/>
    <property type="match status" value="1"/>
</dbReference>
<dbReference type="Gene3D" id="1.10.630.10">
    <property type="entry name" value="Cytochrome P450"/>
    <property type="match status" value="1"/>
</dbReference>
<dbReference type="InterPro" id="IPR001128">
    <property type="entry name" value="Cyt_P450"/>
</dbReference>
<dbReference type="InterPro" id="IPR017972">
    <property type="entry name" value="Cyt_P450_CS"/>
</dbReference>
<dbReference type="InterPro" id="IPR002401">
    <property type="entry name" value="Cyt_P450_E_grp-I"/>
</dbReference>
<dbReference type="InterPro" id="IPR008069">
    <property type="entry name" value="Cyt_P450_E_grp-I_CYP2D-like"/>
</dbReference>
<dbReference type="InterPro" id="IPR036396">
    <property type="entry name" value="Cyt_P450_sf"/>
</dbReference>
<dbReference type="InterPro" id="IPR050182">
    <property type="entry name" value="Cytochrome_P450_fam2"/>
</dbReference>
<dbReference type="PANTHER" id="PTHR24300:SF1">
    <property type="entry name" value="CYTOCHROME P450 2D6-RELATED"/>
    <property type="match status" value="1"/>
</dbReference>
<dbReference type="PANTHER" id="PTHR24300">
    <property type="entry name" value="CYTOCHROME P450 508A4-RELATED"/>
    <property type="match status" value="1"/>
</dbReference>
<dbReference type="Pfam" id="PF00067">
    <property type="entry name" value="p450"/>
    <property type="match status" value="1"/>
</dbReference>
<dbReference type="PRINTS" id="PR00463">
    <property type="entry name" value="EP450I"/>
</dbReference>
<dbReference type="PRINTS" id="PR01686">
    <property type="entry name" value="EP450ICYP2D"/>
</dbReference>
<dbReference type="PRINTS" id="PR00385">
    <property type="entry name" value="P450"/>
</dbReference>
<dbReference type="SUPFAM" id="SSF48264">
    <property type="entry name" value="Cytochrome P450"/>
    <property type="match status" value="1"/>
</dbReference>
<dbReference type="PROSITE" id="PS00086">
    <property type="entry name" value="CYTOCHROME_P450"/>
    <property type="match status" value="1"/>
</dbReference>
<keyword id="KW-0903">Direct protein sequencing</keyword>
<keyword id="KW-0256">Endoplasmic reticulum</keyword>
<keyword id="KW-0349">Heme</keyword>
<keyword id="KW-0408">Iron</keyword>
<keyword id="KW-0472">Membrane</keyword>
<keyword id="KW-0479">Metal-binding</keyword>
<keyword id="KW-0492">Microsome</keyword>
<keyword id="KW-0503">Monooxygenase</keyword>
<keyword id="KW-0560">Oxidoreductase</keyword>
<keyword id="KW-0597">Phosphoprotein</keyword>
<keyword id="KW-1185">Reference proteome</keyword>
<name>CP2DG_CAVPO</name>
<accession>Q64403</accession>
<accession>O54866</accession>
<gene>
    <name type="primary">CYP2D16</name>
</gene>
<proteinExistence type="evidence at protein level"/>
<comment type="function">
    <text>Cytochromes P450 are a group of heme-thiolate monooxygenases. In liver microsomes, this enzyme is involved in an NADPH-dependent electron transport pathway. It oxidizes a variety of structurally unrelated compounds, including steroids, fatty acids, and xenobiotics.</text>
</comment>
<comment type="catalytic activity">
    <reaction>
        <text>an organic molecule + reduced [NADPH--hemoprotein reductase] + O2 = an alcohol + oxidized [NADPH--hemoprotein reductase] + H2O + H(+)</text>
        <dbReference type="Rhea" id="RHEA:17149"/>
        <dbReference type="Rhea" id="RHEA-COMP:11964"/>
        <dbReference type="Rhea" id="RHEA-COMP:11965"/>
        <dbReference type="ChEBI" id="CHEBI:15377"/>
        <dbReference type="ChEBI" id="CHEBI:15378"/>
        <dbReference type="ChEBI" id="CHEBI:15379"/>
        <dbReference type="ChEBI" id="CHEBI:30879"/>
        <dbReference type="ChEBI" id="CHEBI:57618"/>
        <dbReference type="ChEBI" id="CHEBI:58210"/>
        <dbReference type="ChEBI" id="CHEBI:142491"/>
        <dbReference type="EC" id="1.14.14.1"/>
    </reaction>
</comment>
<comment type="cofactor">
    <cofactor evidence="1">
        <name>heme</name>
        <dbReference type="ChEBI" id="CHEBI:30413"/>
    </cofactor>
</comment>
<comment type="subcellular location">
    <subcellularLocation>
        <location>Endoplasmic reticulum membrane</location>
        <topology>Peripheral membrane protein</topology>
    </subcellularLocation>
    <subcellularLocation>
        <location>Microsome membrane</location>
        <topology>Peripheral membrane protein</topology>
    </subcellularLocation>
</comment>
<comment type="tissue specificity">
    <text>Expressed at high levels in the inner zone of the adrenal cortex.</text>
</comment>
<comment type="similarity">
    <text evidence="3">Belongs to the cytochrome P450 family.</text>
</comment>
<protein>
    <recommendedName>
        <fullName>Cytochrome P450 2D16</fullName>
        <ecNumber>1.14.14.1</ecNumber>
    </recommendedName>
    <alternativeName>
        <fullName>CYPIID16</fullName>
    </alternativeName>
</protein>
<evidence type="ECO:0000250" key="1"/>
<evidence type="ECO:0000250" key="2">
    <source>
        <dbReference type="UniProtKB" id="P10634"/>
    </source>
</evidence>
<evidence type="ECO:0000305" key="3"/>
<reference key="1">
    <citation type="journal article" date="1995" name="Biochem. Biophys. Res. Commun.">
        <title>Molecular cloning and sequencing of a guinea pig cytochrome P4502D (CYP2D16): high level expression in adrenal microsomes.</title>
        <authorList>
            <person name="Jiang Q."/>
            <person name="Voigt J.M."/>
            <person name="Colby H.D."/>
        </authorList>
    </citation>
    <scope>NUCLEOTIDE SEQUENCE [MRNA]</scope>
    <scope>PROTEIN SEQUENCE OF 1-38</scope>
    <source>
        <strain>13</strain>
        <tissue>Adrenal cortex</tissue>
    </source>
</reference>
<reference key="2">
    <citation type="submission" date="1997-08" db="EMBL/GenBank/DDBJ databases">
        <title>The gene sequence of a xenobiotic metabolism-related cytochrome P450 isozyme (CYP2D16) in guinea pig adrenal gland.</title>
        <authorList>
            <person name="Sun Y."/>
            <person name="Voigt J.M."/>
            <person name="Pierce J.C."/>
            <person name="Colby H.D."/>
        </authorList>
    </citation>
    <scope>NUCLEOTIDE SEQUENCE [GENOMIC DNA]</scope>
    <source>
        <strain>Hartley</strain>
        <tissue>Adrenal gland</tissue>
    </source>
</reference>